<feature type="chain" id="PRO_0000222535" description="Coat protein">
    <location>
        <begin position="1"/>
        <end position="198"/>
    </location>
</feature>
<comment type="subcellular location">
    <subcellularLocation>
        <location evidence="1">Virion</location>
    </subcellularLocation>
</comment>
<dbReference type="EMBL" id="M64479">
    <property type="protein sequence ID" value="AAA69584.1"/>
    <property type="molecule type" value="Genomic_RNA"/>
</dbReference>
<dbReference type="RefSeq" id="YP_009507838.1">
    <property type="nucleotide sequence ID" value="NC_038701.1"/>
</dbReference>
<dbReference type="SMR" id="P25879"/>
<dbReference type="GeneID" id="37618961"/>
<dbReference type="OrthoDB" id="33892at10239"/>
<dbReference type="Proteomes" id="UP000232697">
    <property type="component" value="Genome"/>
</dbReference>
<dbReference type="GO" id="GO:0019028">
    <property type="term" value="C:viral capsid"/>
    <property type="evidence" value="ECO:0007669"/>
    <property type="project" value="UniProtKB-KW"/>
</dbReference>
<dbReference type="GO" id="GO:0005198">
    <property type="term" value="F:structural molecule activity"/>
    <property type="evidence" value="ECO:0007669"/>
    <property type="project" value="InterPro"/>
</dbReference>
<dbReference type="CDD" id="cd00259">
    <property type="entry name" value="STNV"/>
    <property type="match status" value="1"/>
</dbReference>
<dbReference type="Gene3D" id="2.60.120.20">
    <property type="match status" value="1"/>
</dbReference>
<dbReference type="InterPro" id="IPR005597">
    <property type="entry name" value="Satellite_CP-like"/>
</dbReference>
<dbReference type="InterPro" id="IPR010392">
    <property type="entry name" value="Satellite_virus_coat"/>
</dbReference>
<dbReference type="InterPro" id="IPR037164">
    <property type="entry name" value="Satellite_virus_coat_sf"/>
</dbReference>
<dbReference type="InterPro" id="IPR029053">
    <property type="entry name" value="Viral_coat"/>
</dbReference>
<dbReference type="Pfam" id="PF03898">
    <property type="entry name" value="TNV_CP"/>
    <property type="match status" value="1"/>
</dbReference>
<dbReference type="PIRSF" id="PIRSF004094">
    <property type="entry name" value="Satellite_CP"/>
    <property type="match status" value="1"/>
</dbReference>
<dbReference type="SUPFAM" id="SSF88650">
    <property type="entry name" value="Satellite viruses"/>
    <property type="match status" value="1"/>
</dbReference>
<protein>
    <recommendedName>
        <fullName>Coat protein</fullName>
    </recommendedName>
</protein>
<reference key="1">
    <citation type="journal article" date="1991" name="Virology">
        <title>Structural similarities between the RNAs of two satellites of tobacco necrosis virus.</title>
        <authorList>
            <person name="Danthinne X."/>
            <person name="Seurinck J."/>
            <person name="van Montagu M."/>
            <person name="Pleij C.W.A."/>
            <person name="van Emmelo J."/>
        </authorList>
    </citation>
    <scope>NUCLEOTIDE SEQUENCE [GENOMIC RNA]</scope>
</reference>
<sequence length="198" mass="21924">MTKRQSKQSNRKSVASQVRSIVESMAEQKRFAFLTNTNTVTTAGTVINLSNNIVQGDDLVNRTGDQIKTIHQTLLTRCTGITNSQSFRFIWFRDNTNRGTTPAVTEVLDSASITSQYNPTTFQQKRFTVFQDFMLDTSIVGRVIVHRTAVDKKRRAIFYNGAASVAASNGPGATFVLVIGSHATGQYDVTAEIVYLDM</sequence>
<accession>P25879</accession>
<keyword id="KW-0167">Capsid protein</keyword>
<keyword id="KW-0946">Virion</keyword>
<name>COAT_STNV2</name>
<proteinExistence type="predicted"/>
<evidence type="ECO:0000305" key="1"/>
<organismHost>
    <name type="scientific">Phaseolus vulgaris</name>
    <name type="common">Kidney bean</name>
    <name type="synonym">French bean</name>
    <dbReference type="NCBI Taxonomy" id="3885"/>
</organismHost>
<organismHost>
    <name type="scientific">Tulipa gesneriana</name>
    <name type="common">Garden tulip</name>
    <dbReference type="NCBI Taxonomy" id="13306"/>
</organismHost>
<organism>
    <name type="scientific">Satellite tobacco necrosis virus 2</name>
    <dbReference type="NCBI Taxonomy" id="12444"/>
    <lineage>
        <taxon>Viruses</taxon>
        <taxon>Riboviria</taxon>
        <taxon>Albetovirus</taxon>
        <taxon>Tobacco albetovirus 2</taxon>
    </lineage>
</organism>